<evidence type="ECO:0000255" key="1">
    <source>
        <dbReference type="HAMAP-Rule" id="MF_00073"/>
    </source>
</evidence>
<evidence type="ECO:0000305" key="2"/>
<dbReference type="EMBL" id="AE005674">
    <property type="protein sequence ID" value="AAN42011.1"/>
    <property type="molecule type" value="Genomic_DNA"/>
</dbReference>
<dbReference type="EMBL" id="AE014073">
    <property type="protein sequence ID" value="AAP15888.1"/>
    <property type="molecule type" value="Genomic_DNA"/>
</dbReference>
<dbReference type="RefSeq" id="NP_706304.1">
    <property type="nucleotide sequence ID" value="NC_004337.2"/>
</dbReference>
<dbReference type="RefSeq" id="WP_000801125.1">
    <property type="nucleotide sequence ID" value="NZ_WPGW01000023.1"/>
</dbReference>
<dbReference type="SMR" id="P0A783"/>
<dbReference type="STRING" id="198214.SF0353"/>
<dbReference type="PaxDb" id="198214-SF0353"/>
<dbReference type="GeneID" id="1027676"/>
<dbReference type="GeneID" id="93777044"/>
<dbReference type="KEGG" id="sfl:SF0353"/>
<dbReference type="KEGG" id="sfx:S0361"/>
<dbReference type="PATRIC" id="fig|198214.7.peg.404"/>
<dbReference type="HOGENOM" id="CLU_087843_4_1_6"/>
<dbReference type="Proteomes" id="UP000001006">
    <property type="component" value="Chromosome"/>
</dbReference>
<dbReference type="Proteomes" id="UP000002673">
    <property type="component" value="Chromosome"/>
</dbReference>
<dbReference type="GO" id="GO:0005829">
    <property type="term" value="C:cytosol"/>
    <property type="evidence" value="ECO:0007669"/>
    <property type="project" value="TreeGrafter"/>
</dbReference>
<dbReference type="GO" id="GO:0003723">
    <property type="term" value="F:RNA binding"/>
    <property type="evidence" value="ECO:0007669"/>
    <property type="project" value="UniProtKB-UniRule"/>
</dbReference>
<dbReference type="GO" id="GO:0006353">
    <property type="term" value="P:DNA-templated transcription termination"/>
    <property type="evidence" value="ECO:0007669"/>
    <property type="project" value="UniProtKB-UniRule"/>
</dbReference>
<dbReference type="GO" id="GO:0031564">
    <property type="term" value="P:transcription antitermination"/>
    <property type="evidence" value="ECO:0007669"/>
    <property type="project" value="UniProtKB-KW"/>
</dbReference>
<dbReference type="CDD" id="cd00619">
    <property type="entry name" value="Terminator_NusB"/>
    <property type="match status" value="1"/>
</dbReference>
<dbReference type="FunFam" id="1.10.940.10:FF:000001">
    <property type="entry name" value="Transcription antitermination factor NusB"/>
    <property type="match status" value="1"/>
</dbReference>
<dbReference type="Gene3D" id="1.10.940.10">
    <property type="entry name" value="NusB-like"/>
    <property type="match status" value="1"/>
</dbReference>
<dbReference type="HAMAP" id="MF_00073">
    <property type="entry name" value="NusB"/>
    <property type="match status" value="1"/>
</dbReference>
<dbReference type="InterPro" id="IPR035926">
    <property type="entry name" value="NusB-like_sf"/>
</dbReference>
<dbReference type="InterPro" id="IPR011605">
    <property type="entry name" value="NusB_fam"/>
</dbReference>
<dbReference type="InterPro" id="IPR006027">
    <property type="entry name" value="NusB_RsmB_TIM44"/>
</dbReference>
<dbReference type="NCBIfam" id="TIGR01951">
    <property type="entry name" value="nusB"/>
    <property type="match status" value="1"/>
</dbReference>
<dbReference type="PANTHER" id="PTHR11078:SF3">
    <property type="entry name" value="ANTITERMINATION NUSB DOMAIN-CONTAINING PROTEIN"/>
    <property type="match status" value="1"/>
</dbReference>
<dbReference type="PANTHER" id="PTHR11078">
    <property type="entry name" value="N UTILIZATION SUBSTANCE PROTEIN B-RELATED"/>
    <property type="match status" value="1"/>
</dbReference>
<dbReference type="Pfam" id="PF01029">
    <property type="entry name" value="NusB"/>
    <property type="match status" value="1"/>
</dbReference>
<dbReference type="SUPFAM" id="SSF48013">
    <property type="entry name" value="NusB-like"/>
    <property type="match status" value="1"/>
</dbReference>
<comment type="function">
    <text evidence="1">Involved in transcription antitermination. Required for transcription of ribosomal RNA (rRNA) genes. Binds specifically to the boxA antiterminator sequence of the ribosomal RNA (rrn) operons.</text>
</comment>
<comment type="similarity">
    <text evidence="1 2">Belongs to the NusB family.</text>
</comment>
<name>NUSB_SHIFL</name>
<sequence length="139" mass="15689">MKPAARRRARECAVQALYSWQLSQNDIADVEYQFLAEQDVKDVDVLYFRELLAGVATNTAYLDGLMKPYLSRLLEELGQVEKAVLRIALYELSKRSDVPYKVAINEAIELAKSFGAEDSHKFVNGVLDKAAPVIRPNKK</sequence>
<keyword id="KW-1185">Reference proteome</keyword>
<keyword id="KW-0694">RNA-binding</keyword>
<keyword id="KW-0804">Transcription</keyword>
<keyword id="KW-0889">Transcription antitermination</keyword>
<keyword id="KW-0805">Transcription regulation</keyword>
<gene>
    <name evidence="1" type="primary">nusB</name>
    <name type="ordered locus">SF0353</name>
    <name type="ordered locus">S0361</name>
</gene>
<reference key="1">
    <citation type="journal article" date="2002" name="Nucleic Acids Res.">
        <title>Genome sequence of Shigella flexneri 2a: insights into pathogenicity through comparison with genomes of Escherichia coli K12 and O157.</title>
        <authorList>
            <person name="Jin Q."/>
            <person name="Yuan Z."/>
            <person name="Xu J."/>
            <person name="Wang Y."/>
            <person name="Shen Y."/>
            <person name="Lu W."/>
            <person name="Wang J."/>
            <person name="Liu H."/>
            <person name="Yang J."/>
            <person name="Yang F."/>
            <person name="Zhang X."/>
            <person name="Zhang J."/>
            <person name="Yang G."/>
            <person name="Wu H."/>
            <person name="Qu D."/>
            <person name="Dong J."/>
            <person name="Sun L."/>
            <person name="Xue Y."/>
            <person name="Zhao A."/>
            <person name="Gao Y."/>
            <person name="Zhu J."/>
            <person name="Kan B."/>
            <person name="Ding K."/>
            <person name="Chen S."/>
            <person name="Cheng H."/>
            <person name="Yao Z."/>
            <person name="He B."/>
            <person name="Chen R."/>
            <person name="Ma D."/>
            <person name="Qiang B."/>
            <person name="Wen Y."/>
            <person name="Hou Y."/>
            <person name="Yu J."/>
        </authorList>
    </citation>
    <scope>NUCLEOTIDE SEQUENCE [LARGE SCALE GENOMIC DNA]</scope>
    <source>
        <strain>301 / Serotype 2a</strain>
    </source>
</reference>
<reference key="2">
    <citation type="journal article" date="2003" name="Infect. Immun.">
        <title>Complete genome sequence and comparative genomics of Shigella flexneri serotype 2a strain 2457T.</title>
        <authorList>
            <person name="Wei J."/>
            <person name="Goldberg M.B."/>
            <person name="Burland V."/>
            <person name="Venkatesan M.M."/>
            <person name="Deng W."/>
            <person name="Fournier G."/>
            <person name="Mayhew G.F."/>
            <person name="Plunkett G. III"/>
            <person name="Rose D.J."/>
            <person name="Darling A."/>
            <person name="Mau B."/>
            <person name="Perna N.T."/>
            <person name="Payne S.M."/>
            <person name="Runyen-Janecky L.J."/>
            <person name="Zhou S."/>
            <person name="Schwartz D.C."/>
            <person name="Blattner F.R."/>
        </authorList>
    </citation>
    <scope>NUCLEOTIDE SEQUENCE [LARGE SCALE GENOMIC DNA]</scope>
    <source>
        <strain>ATCC 700930 / 2457T / Serotype 2a</strain>
    </source>
</reference>
<protein>
    <recommendedName>
        <fullName evidence="1">Transcription antitermination protein NusB</fullName>
    </recommendedName>
    <alternativeName>
        <fullName evidence="1">Antitermination factor NusB</fullName>
    </alternativeName>
</protein>
<accession>P0A783</accession>
<accession>P04381</accession>
<feature type="chain" id="PRO_0000176576" description="Transcription antitermination protein NusB">
    <location>
        <begin position="1"/>
        <end position="139"/>
    </location>
</feature>
<proteinExistence type="inferred from homology"/>
<organism>
    <name type="scientific">Shigella flexneri</name>
    <dbReference type="NCBI Taxonomy" id="623"/>
    <lineage>
        <taxon>Bacteria</taxon>
        <taxon>Pseudomonadati</taxon>
        <taxon>Pseudomonadota</taxon>
        <taxon>Gammaproteobacteria</taxon>
        <taxon>Enterobacterales</taxon>
        <taxon>Enterobacteriaceae</taxon>
        <taxon>Shigella</taxon>
    </lineage>
</organism>